<dbReference type="EMBL" id="CP000446">
    <property type="protein sequence ID" value="ABI39742.1"/>
    <property type="status" value="ALT_INIT"/>
    <property type="molecule type" value="Genomic_DNA"/>
</dbReference>
<dbReference type="RefSeq" id="WP_011626732.1">
    <property type="nucleotide sequence ID" value="NC_008321.1"/>
</dbReference>
<dbReference type="KEGG" id="she:Shewmr4_2671"/>
<dbReference type="HOGENOM" id="CLU_187346_1_0_6"/>
<dbReference type="GO" id="GO:0005886">
    <property type="term" value="C:plasma membrane"/>
    <property type="evidence" value="ECO:0007669"/>
    <property type="project" value="UniProtKB-SubCell"/>
</dbReference>
<dbReference type="HAMAP" id="MF_01361">
    <property type="entry name" value="UPF0391"/>
    <property type="match status" value="1"/>
</dbReference>
<dbReference type="InterPro" id="IPR009760">
    <property type="entry name" value="DUF1328"/>
</dbReference>
<dbReference type="NCBIfam" id="NF010228">
    <property type="entry name" value="PRK13682.1-3"/>
    <property type="match status" value="1"/>
</dbReference>
<dbReference type="NCBIfam" id="NF010229">
    <property type="entry name" value="PRK13682.1-4"/>
    <property type="match status" value="1"/>
</dbReference>
<dbReference type="Pfam" id="PF07043">
    <property type="entry name" value="DUF1328"/>
    <property type="match status" value="1"/>
</dbReference>
<dbReference type="PIRSF" id="PIRSF036466">
    <property type="entry name" value="UCP036466"/>
    <property type="match status" value="1"/>
</dbReference>
<gene>
    <name type="ordered locus">Shewmr4_2671</name>
</gene>
<sequence length="58" mass="6034">MLGWTLMFLVVAIIAGLFGFTGIAGAAAGIAKIIFFLFIVLLVISLLVNALKGKAPRA</sequence>
<organism>
    <name type="scientific">Shewanella sp. (strain MR-4)</name>
    <dbReference type="NCBI Taxonomy" id="60480"/>
    <lineage>
        <taxon>Bacteria</taxon>
        <taxon>Pseudomonadati</taxon>
        <taxon>Pseudomonadota</taxon>
        <taxon>Gammaproteobacteria</taxon>
        <taxon>Alteromonadales</taxon>
        <taxon>Shewanellaceae</taxon>
        <taxon>Shewanella</taxon>
    </lineage>
</organism>
<evidence type="ECO:0000255" key="1">
    <source>
        <dbReference type="HAMAP-Rule" id="MF_01361"/>
    </source>
</evidence>
<evidence type="ECO:0000305" key="2"/>
<accession>Q0HGS5</accession>
<proteinExistence type="inferred from homology"/>
<feature type="chain" id="PRO_5000129999" description="UPF0391 membrane protein Shewmr4_2671">
    <location>
        <begin position="1"/>
        <end position="58"/>
    </location>
</feature>
<feature type="transmembrane region" description="Helical" evidence="1">
    <location>
        <begin position="6"/>
        <end position="26"/>
    </location>
</feature>
<feature type="transmembrane region" description="Helical" evidence="1">
    <location>
        <begin position="28"/>
        <end position="48"/>
    </location>
</feature>
<reference key="1">
    <citation type="submission" date="2006-08" db="EMBL/GenBank/DDBJ databases">
        <title>Complete sequence of Shewanella sp. MR-4.</title>
        <authorList>
            <consortium name="US DOE Joint Genome Institute"/>
            <person name="Copeland A."/>
            <person name="Lucas S."/>
            <person name="Lapidus A."/>
            <person name="Barry K."/>
            <person name="Detter J.C."/>
            <person name="Glavina del Rio T."/>
            <person name="Hammon N."/>
            <person name="Israni S."/>
            <person name="Dalin E."/>
            <person name="Tice H."/>
            <person name="Pitluck S."/>
            <person name="Kiss H."/>
            <person name="Brettin T."/>
            <person name="Bruce D."/>
            <person name="Han C."/>
            <person name="Tapia R."/>
            <person name="Gilna P."/>
            <person name="Schmutz J."/>
            <person name="Larimer F."/>
            <person name="Land M."/>
            <person name="Hauser L."/>
            <person name="Kyrpides N."/>
            <person name="Mikhailova N."/>
            <person name="Nealson K."/>
            <person name="Konstantinidis K."/>
            <person name="Klappenbach J."/>
            <person name="Tiedje J."/>
            <person name="Richardson P."/>
        </authorList>
    </citation>
    <scope>NUCLEOTIDE SEQUENCE [LARGE SCALE GENOMIC DNA]</scope>
    <source>
        <strain>MR-4</strain>
    </source>
</reference>
<keyword id="KW-1003">Cell membrane</keyword>
<keyword id="KW-0472">Membrane</keyword>
<keyword id="KW-0812">Transmembrane</keyword>
<keyword id="KW-1133">Transmembrane helix</keyword>
<comment type="subcellular location">
    <subcellularLocation>
        <location evidence="1">Cell membrane</location>
        <topology evidence="1">Multi-pass membrane protein</topology>
    </subcellularLocation>
</comment>
<comment type="similarity">
    <text evidence="1">Belongs to the UPF0391 family.</text>
</comment>
<comment type="sequence caution" evidence="2">
    <conflict type="erroneous initiation">
        <sequence resource="EMBL-CDS" id="ABI39742"/>
    </conflict>
</comment>
<name>Y2671_SHESM</name>
<protein>
    <recommendedName>
        <fullName evidence="1">UPF0391 membrane protein Shewmr4_2671</fullName>
    </recommendedName>
</protein>